<proteinExistence type="inferred from homology"/>
<sequence length="161" mass="17385">MKYDTSELCDIYQEDVNVVEPLFSNFGGRSSFGGQIITVKCFEDNGLLYDLLEQNGRGHILLIDGGGSVRRALIDADLARLAVQNEWEGLVVYGAVRQVDDLEELDIGIQALAAIPVGAAGEGIGESDVRVNFGGVTFFSGDHLYADNTGMILSEDPLDIE</sequence>
<reference key="1">
    <citation type="submission" date="2006-09" db="EMBL/GenBank/DDBJ databases">
        <authorList>
            <consortium name="The Klebsiella pneumonia Genome Sequencing Project"/>
            <person name="McClelland M."/>
            <person name="Sanderson E.K."/>
            <person name="Spieth J."/>
            <person name="Clifton W.S."/>
            <person name="Latreille P."/>
            <person name="Sabo A."/>
            <person name="Pepin K."/>
            <person name="Bhonagiri V."/>
            <person name="Porwollik S."/>
            <person name="Ali J."/>
            <person name="Wilson R.K."/>
        </authorList>
    </citation>
    <scope>NUCLEOTIDE SEQUENCE [LARGE SCALE GENOMIC DNA]</scope>
    <source>
        <strain>ATCC 700721 / MGH 78578</strain>
    </source>
</reference>
<protein>
    <recommendedName>
        <fullName evidence="1">Regulator of ribonuclease activity A</fullName>
    </recommendedName>
</protein>
<feature type="chain" id="PRO_1000013846" description="Regulator of ribonuclease activity A">
    <location>
        <begin position="1"/>
        <end position="161"/>
    </location>
</feature>
<name>RRAA_KLEP7</name>
<keyword id="KW-0963">Cytoplasm</keyword>
<evidence type="ECO:0000255" key="1">
    <source>
        <dbReference type="HAMAP-Rule" id="MF_00471"/>
    </source>
</evidence>
<gene>
    <name evidence="1" type="primary">rraA</name>
    <name type="ordered locus">KPN78578_41790</name>
    <name type="ORF">KPN_04224</name>
</gene>
<comment type="function">
    <text evidence="1">Globally modulates RNA abundance by binding to RNase E (Rne) and regulating its endonucleolytic activity. Can modulate Rne action in a substrate-dependent manner by altering the composition of the degradosome. Modulates RNA-binding and helicase activities of the degradosome.</text>
</comment>
<comment type="subunit">
    <text evidence="1">Homotrimer. Binds to both RNA-binding sites in the C-terminal region of Rne and to RhlB.</text>
</comment>
<comment type="subcellular location">
    <subcellularLocation>
        <location evidence="1">Cytoplasm</location>
    </subcellularLocation>
</comment>
<comment type="similarity">
    <text evidence="1">Belongs to the RraA family.</text>
</comment>
<organism>
    <name type="scientific">Klebsiella pneumoniae subsp. pneumoniae (strain ATCC 700721 / MGH 78578)</name>
    <dbReference type="NCBI Taxonomy" id="272620"/>
    <lineage>
        <taxon>Bacteria</taxon>
        <taxon>Pseudomonadati</taxon>
        <taxon>Pseudomonadota</taxon>
        <taxon>Gammaproteobacteria</taxon>
        <taxon>Enterobacterales</taxon>
        <taxon>Enterobacteriaceae</taxon>
        <taxon>Klebsiella/Raoultella group</taxon>
        <taxon>Klebsiella</taxon>
        <taxon>Klebsiella pneumoniae complex</taxon>
    </lineage>
</organism>
<dbReference type="EMBL" id="CP000647">
    <property type="protein sequence ID" value="ABR79603.1"/>
    <property type="molecule type" value="Genomic_DNA"/>
</dbReference>
<dbReference type="RefSeq" id="WP_002882913.1">
    <property type="nucleotide sequence ID" value="NC_009648.1"/>
</dbReference>
<dbReference type="SMR" id="A6TGB9"/>
<dbReference type="STRING" id="272620.KPN_04224"/>
<dbReference type="jPOST" id="A6TGB9"/>
<dbReference type="PaxDb" id="272620-KPN_04224"/>
<dbReference type="EnsemblBacteria" id="ABR79603">
    <property type="protein sequence ID" value="ABR79603"/>
    <property type="gene ID" value="KPN_04224"/>
</dbReference>
<dbReference type="GeneID" id="93275767"/>
<dbReference type="KEGG" id="kpn:KPN_04224"/>
<dbReference type="HOGENOM" id="CLU_072626_4_0_6"/>
<dbReference type="Proteomes" id="UP000000265">
    <property type="component" value="Chromosome"/>
</dbReference>
<dbReference type="GO" id="GO:0005829">
    <property type="term" value="C:cytosol"/>
    <property type="evidence" value="ECO:0007669"/>
    <property type="project" value="TreeGrafter"/>
</dbReference>
<dbReference type="GO" id="GO:0060698">
    <property type="term" value="F:endoribonuclease inhibitor activity"/>
    <property type="evidence" value="ECO:0007669"/>
    <property type="project" value="UniProtKB-UniRule"/>
</dbReference>
<dbReference type="GO" id="GO:0019899">
    <property type="term" value="F:enzyme binding"/>
    <property type="evidence" value="ECO:0007669"/>
    <property type="project" value="UniProtKB-UniRule"/>
</dbReference>
<dbReference type="GO" id="GO:1902369">
    <property type="term" value="P:negative regulation of RNA catabolic process"/>
    <property type="evidence" value="ECO:0007669"/>
    <property type="project" value="TreeGrafter"/>
</dbReference>
<dbReference type="CDD" id="cd16841">
    <property type="entry name" value="RraA_family"/>
    <property type="match status" value="1"/>
</dbReference>
<dbReference type="FunFam" id="3.50.30.40:FF:000001">
    <property type="entry name" value="Regulator of ribonuclease activity A"/>
    <property type="match status" value="1"/>
</dbReference>
<dbReference type="Gene3D" id="3.50.30.40">
    <property type="entry name" value="Ribonuclease E inhibitor RraA/RraA-like"/>
    <property type="match status" value="1"/>
</dbReference>
<dbReference type="HAMAP" id="MF_00471">
    <property type="entry name" value="RraA"/>
    <property type="match status" value="1"/>
</dbReference>
<dbReference type="InterPro" id="IPR010203">
    <property type="entry name" value="RraA"/>
</dbReference>
<dbReference type="InterPro" id="IPR005493">
    <property type="entry name" value="RraA/RraA-like"/>
</dbReference>
<dbReference type="InterPro" id="IPR036704">
    <property type="entry name" value="RraA/RraA-like_sf"/>
</dbReference>
<dbReference type="InterPro" id="IPR014339">
    <property type="entry name" value="RraA_gpbac"/>
</dbReference>
<dbReference type="NCBIfam" id="TIGR01935">
    <property type="entry name" value="NOT-MenG"/>
    <property type="match status" value="1"/>
</dbReference>
<dbReference type="NCBIfam" id="NF006875">
    <property type="entry name" value="PRK09372.1"/>
    <property type="match status" value="1"/>
</dbReference>
<dbReference type="NCBIfam" id="TIGR02998">
    <property type="entry name" value="RraA_entero"/>
    <property type="match status" value="1"/>
</dbReference>
<dbReference type="PANTHER" id="PTHR33254">
    <property type="entry name" value="4-HYDROXY-4-METHYL-2-OXOGLUTARATE ALDOLASE 3-RELATED"/>
    <property type="match status" value="1"/>
</dbReference>
<dbReference type="PANTHER" id="PTHR33254:SF29">
    <property type="entry name" value="REGULATOR OF RIBONUCLEASE ACTIVITY A"/>
    <property type="match status" value="1"/>
</dbReference>
<dbReference type="Pfam" id="PF03737">
    <property type="entry name" value="RraA-like"/>
    <property type="match status" value="1"/>
</dbReference>
<dbReference type="SUPFAM" id="SSF89562">
    <property type="entry name" value="RraA-like"/>
    <property type="match status" value="1"/>
</dbReference>
<accession>A6TGB9</accession>